<gene>
    <name type="primary">Defa25</name>
    <name type="synonym">Defcr25</name>
</gene>
<reference key="1">
    <citation type="journal article" date="2004" name="Physiol. Genomics">
        <title>Rapid evolution and diversification of mammalian alpha-defensins as revealed by comparative analysis of rodent and primate genes.</title>
        <authorList>
            <person name="Patil A."/>
            <person name="Hughes A.L."/>
            <person name="Zhang G."/>
        </authorList>
    </citation>
    <scope>NUCLEOTIDE SEQUENCE [MRNA]</scope>
</reference>
<dbReference type="EMBL" id="AY746430">
    <property type="protein sequence ID" value="AAW78339.1"/>
    <property type="molecule type" value="mRNA"/>
</dbReference>
<dbReference type="CCDS" id="CCDS52502.1"/>
<dbReference type="RefSeq" id="NP_031875.1">
    <property type="nucleotide sequence ID" value="NM_007849.2"/>
</dbReference>
<dbReference type="SMR" id="Q5G864"/>
<dbReference type="FunCoup" id="Q5G864">
    <property type="interactions" value="41"/>
</dbReference>
<dbReference type="STRING" id="10090.ENSMUSP00000093075"/>
<dbReference type="PaxDb" id="10090-ENSMUSP00000093075"/>
<dbReference type="Ensembl" id="ENSMUST00000095425.2">
    <property type="protein sequence ID" value="ENSMUSP00000093075.2"/>
    <property type="gene ID" value="ENSMUSG00000094687.2"/>
</dbReference>
<dbReference type="GeneID" id="13236"/>
<dbReference type="KEGG" id="mmu:13236"/>
<dbReference type="UCSC" id="uc012gaq.1">
    <property type="organism name" value="mouse"/>
</dbReference>
<dbReference type="AGR" id="MGI:3630385"/>
<dbReference type="CTD" id="13236"/>
<dbReference type="MGI" id="MGI:3630385">
    <property type="gene designation" value="Defa25"/>
</dbReference>
<dbReference type="VEuPathDB" id="HostDB:ENSMUSG00000094687"/>
<dbReference type="GeneTree" id="ENSGT00940000153268"/>
<dbReference type="HOGENOM" id="CLU_160803_1_0_1"/>
<dbReference type="InParanoid" id="Q5G864"/>
<dbReference type="OrthoDB" id="9625549at2759"/>
<dbReference type="PhylomeDB" id="Q5G864"/>
<dbReference type="TreeFam" id="TF338414"/>
<dbReference type="Reactome" id="R-MMU-1461973">
    <property type="pathway name" value="Defensins"/>
</dbReference>
<dbReference type="Reactome" id="R-MMU-1462054">
    <property type="pathway name" value="Alpha-defensins"/>
</dbReference>
<dbReference type="Reactome" id="R-MMU-6798695">
    <property type="pathway name" value="Neutrophil degranulation"/>
</dbReference>
<dbReference type="BioGRID-ORCS" id="13236">
    <property type="hits" value="6 hits in 43 CRISPR screens"/>
</dbReference>
<dbReference type="PRO" id="PR:Q5G864"/>
<dbReference type="Proteomes" id="UP000000589">
    <property type="component" value="Chromosome 8"/>
</dbReference>
<dbReference type="RNAct" id="Q5G864">
    <property type="molecule type" value="protein"/>
</dbReference>
<dbReference type="Bgee" id="ENSMUSG00000094687">
    <property type="expression patterns" value="Expressed in ileum and 1 other cell type or tissue"/>
</dbReference>
<dbReference type="GO" id="GO:0005615">
    <property type="term" value="C:extracellular space"/>
    <property type="evidence" value="ECO:0007669"/>
    <property type="project" value="InterPro"/>
</dbReference>
<dbReference type="GO" id="GO:0042742">
    <property type="term" value="P:defense response to bacterium"/>
    <property type="evidence" value="ECO:0007669"/>
    <property type="project" value="UniProtKB-KW"/>
</dbReference>
<dbReference type="InterPro" id="IPR016327">
    <property type="entry name" value="Alpha-defensin"/>
</dbReference>
<dbReference type="InterPro" id="IPR006081">
    <property type="entry name" value="Alpha-defensin_C"/>
</dbReference>
<dbReference type="InterPro" id="IPR002366">
    <property type="entry name" value="Alpha-defensin_N"/>
</dbReference>
<dbReference type="InterPro" id="IPR006080">
    <property type="entry name" value="Beta/alpha-defensin_C"/>
</dbReference>
<dbReference type="PANTHER" id="PTHR11876">
    <property type="entry name" value="ALPHA-DEFENSIN 1"/>
    <property type="match status" value="1"/>
</dbReference>
<dbReference type="PANTHER" id="PTHR11876:SF2">
    <property type="entry name" value="ALPHA-DEFENSIN 1-RELATED"/>
    <property type="match status" value="1"/>
</dbReference>
<dbReference type="Pfam" id="PF00323">
    <property type="entry name" value="Defensin_1"/>
    <property type="match status" value="1"/>
</dbReference>
<dbReference type="Pfam" id="PF00879">
    <property type="entry name" value="Defensin_propep"/>
    <property type="match status" value="1"/>
</dbReference>
<dbReference type="PIRSF" id="PIRSF001875">
    <property type="entry name" value="Alpha-defensin"/>
    <property type="match status" value="1"/>
</dbReference>
<dbReference type="SMART" id="SM01418">
    <property type="entry name" value="Defensin_propep"/>
    <property type="match status" value="1"/>
</dbReference>
<dbReference type="SMART" id="SM00048">
    <property type="entry name" value="DEFSN"/>
    <property type="match status" value="1"/>
</dbReference>
<dbReference type="SUPFAM" id="SSF57392">
    <property type="entry name" value="Defensin-like"/>
    <property type="match status" value="1"/>
</dbReference>
<feature type="signal peptide" evidence="2">
    <location>
        <begin position="1"/>
        <end position="19"/>
    </location>
</feature>
<feature type="propeptide" id="PRO_0000300076" evidence="1">
    <location>
        <begin position="20"/>
        <end position="57"/>
    </location>
</feature>
<feature type="peptide" id="PRO_0000300077" description="Alpha-defensin 25">
    <location>
        <begin position="58"/>
        <end position="92"/>
    </location>
</feature>
<feature type="region of interest" description="Disordered" evidence="3">
    <location>
        <begin position="24"/>
        <end position="53"/>
    </location>
</feature>
<feature type="compositionally biased region" description="Basic and acidic residues" evidence="3">
    <location>
        <begin position="24"/>
        <end position="40"/>
    </location>
</feature>
<feature type="disulfide bond" evidence="1">
    <location>
        <begin position="63"/>
        <end position="92"/>
    </location>
</feature>
<feature type="disulfide bond" evidence="1">
    <location>
        <begin position="65"/>
        <end position="80"/>
    </location>
</feature>
<feature type="disulfide bond" evidence="1">
    <location>
        <begin position="70"/>
        <end position="91"/>
    </location>
</feature>
<comment type="function">
    <text evidence="1">May have microbicidal activities.</text>
</comment>
<comment type="subcellular location">
    <subcellularLocation>
        <location evidence="1">Secreted</location>
    </subcellularLocation>
</comment>
<comment type="similarity">
    <text evidence="4">Belongs to the alpha-defensin family.</text>
</comment>
<sequence>MKTLVLLSALALLAFQVQADPIQNRDEESKIDEQPGKEDQAVSVSFGDPEGSSLQEECEDLICYCRTRGCKRRERLNGTCRKGHLMYMLWCC</sequence>
<name>DFA25_MOUSE</name>
<evidence type="ECO:0000250" key="1"/>
<evidence type="ECO:0000255" key="2"/>
<evidence type="ECO:0000256" key="3">
    <source>
        <dbReference type="SAM" id="MobiDB-lite"/>
    </source>
</evidence>
<evidence type="ECO:0000305" key="4"/>
<accession>Q5G864</accession>
<organism>
    <name type="scientific">Mus musculus</name>
    <name type="common">Mouse</name>
    <dbReference type="NCBI Taxonomy" id="10090"/>
    <lineage>
        <taxon>Eukaryota</taxon>
        <taxon>Metazoa</taxon>
        <taxon>Chordata</taxon>
        <taxon>Craniata</taxon>
        <taxon>Vertebrata</taxon>
        <taxon>Euteleostomi</taxon>
        <taxon>Mammalia</taxon>
        <taxon>Eutheria</taxon>
        <taxon>Euarchontoglires</taxon>
        <taxon>Glires</taxon>
        <taxon>Rodentia</taxon>
        <taxon>Myomorpha</taxon>
        <taxon>Muroidea</taxon>
        <taxon>Muridae</taxon>
        <taxon>Murinae</taxon>
        <taxon>Mus</taxon>
        <taxon>Mus</taxon>
    </lineage>
</organism>
<keyword id="KW-0044">Antibiotic</keyword>
<keyword id="KW-0929">Antimicrobial</keyword>
<keyword id="KW-0211">Defensin</keyword>
<keyword id="KW-1015">Disulfide bond</keyword>
<keyword id="KW-1185">Reference proteome</keyword>
<keyword id="KW-0964">Secreted</keyword>
<keyword id="KW-0732">Signal</keyword>
<protein>
    <recommendedName>
        <fullName>Alpha-defensin 25</fullName>
    </recommendedName>
    <alternativeName>
        <fullName>Defensin-related cryptdin-25</fullName>
    </alternativeName>
</protein>
<proteinExistence type="inferred from homology"/>